<comment type="function">
    <text evidence="1">Golgi membrane protein involved in vesicular trafficking.</text>
</comment>
<comment type="subcellular location">
    <subcellularLocation>
        <location evidence="1">Golgi apparatus membrane</location>
        <topology evidence="1">Multi-pass membrane protein</topology>
    </subcellularLocation>
</comment>
<comment type="similarity">
    <text evidence="3">Belongs to the TVP18 family.</text>
</comment>
<comment type="sequence caution" evidence="3">
    <conflict type="erroneous gene model prediction">
        <sequence resource="EMBL-CDS" id="EAW21502"/>
    </conflict>
</comment>
<reference key="1">
    <citation type="journal article" date="2008" name="PLoS Genet.">
        <title>Genomic islands in the pathogenic filamentous fungus Aspergillus fumigatus.</title>
        <authorList>
            <person name="Fedorova N.D."/>
            <person name="Khaldi N."/>
            <person name="Joardar V.S."/>
            <person name="Maiti R."/>
            <person name="Amedeo P."/>
            <person name="Anderson M.J."/>
            <person name="Crabtree J."/>
            <person name="Silva J.C."/>
            <person name="Badger J.H."/>
            <person name="Albarraq A."/>
            <person name="Angiuoli S."/>
            <person name="Bussey H."/>
            <person name="Bowyer P."/>
            <person name="Cotty P.J."/>
            <person name="Dyer P.S."/>
            <person name="Egan A."/>
            <person name="Galens K."/>
            <person name="Fraser-Liggett C.M."/>
            <person name="Haas B.J."/>
            <person name="Inman J.M."/>
            <person name="Kent R."/>
            <person name="Lemieux S."/>
            <person name="Malavazi I."/>
            <person name="Orvis J."/>
            <person name="Roemer T."/>
            <person name="Ronning C.M."/>
            <person name="Sundaram J.P."/>
            <person name="Sutton G."/>
            <person name="Turner G."/>
            <person name="Venter J.C."/>
            <person name="White O.R."/>
            <person name="Whitty B.R."/>
            <person name="Youngman P."/>
            <person name="Wolfe K.H."/>
            <person name="Goldman G.H."/>
            <person name="Wortman J.R."/>
            <person name="Jiang B."/>
            <person name="Denning D.W."/>
            <person name="Nierman W.C."/>
        </authorList>
    </citation>
    <scope>NUCLEOTIDE SEQUENCE [LARGE SCALE GENOMIC DNA]</scope>
    <source>
        <strain>ATCC 1020 / DSM 3700 / CBS 544.65 / FGSC A1164 / JCM 1740 / NRRL 181 / WB 181</strain>
    </source>
</reference>
<sequence length="153" mass="16836">MTLAEEFRSRNFSIYGQWTGVLCIILCIALGIANIFSFAVLRIIFSVLCLYAMSGLILIFIEVPFLLRICPTSSKFDAFIRRFTTNWMRAAMYAIMSVVQWLSLLPGSGASSLIVAAVFLLIASIFYALAGLKSQEFVGSKTLGGQGLVQMIV</sequence>
<keyword id="KW-0325">Glycoprotein</keyword>
<keyword id="KW-0333">Golgi apparatus</keyword>
<keyword id="KW-0472">Membrane</keyword>
<keyword id="KW-1185">Reference proteome</keyword>
<keyword id="KW-0812">Transmembrane</keyword>
<keyword id="KW-1133">Transmembrane helix</keyword>
<feature type="chain" id="PRO_0000343023" description="Golgi apparatus membrane protein tvp18">
    <location>
        <begin position="1"/>
        <end position="153"/>
    </location>
</feature>
<feature type="transmembrane region" description="Helical" evidence="2">
    <location>
        <begin position="21"/>
        <end position="41"/>
    </location>
</feature>
<feature type="transmembrane region" description="Helical" evidence="2">
    <location>
        <begin position="43"/>
        <end position="63"/>
    </location>
</feature>
<feature type="transmembrane region" description="Helical" evidence="2">
    <location>
        <begin position="90"/>
        <end position="110"/>
    </location>
</feature>
<feature type="transmembrane region" description="Helical" evidence="2">
    <location>
        <begin position="112"/>
        <end position="132"/>
    </location>
</feature>
<feature type="glycosylation site" description="N-linked (GlcNAc...) asparagine" evidence="2">
    <location>
        <position position="11"/>
    </location>
</feature>
<gene>
    <name type="primary">tvp18</name>
    <name type="ORF">NFIA_066690</name>
</gene>
<accession>A1D708</accession>
<organism>
    <name type="scientific">Neosartorya fischeri (strain ATCC 1020 / DSM 3700 / CBS 544.65 / FGSC A1164 / JCM 1740 / NRRL 181 / WB 181)</name>
    <name type="common">Aspergillus fischerianus</name>
    <dbReference type="NCBI Taxonomy" id="331117"/>
    <lineage>
        <taxon>Eukaryota</taxon>
        <taxon>Fungi</taxon>
        <taxon>Dikarya</taxon>
        <taxon>Ascomycota</taxon>
        <taxon>Pezizomycotina</taxon>
        <taxon>Eurotiomycetes</taxon>
        <taxon>Eurotiomycetidae</taxon>
        <taxon>Eurotiales</taxon>
        <taxon>Aspergillaceae</taxon>
        <taxon>Aspergillus</taxon>
        <taxon>Aspergillus subgen. Fumigati</taxon>
    </lineage>
</organism>
<protein>
    <recommendedName>
        <fullName>Golgi apparatus membrane protein tvp18</fullName>
    </recommendedName>
</protein>
<name>TVP18_NEOFI</name>
<evidence type="ECO:0000250" key="1"/>
<evidence type="ECO:0000255" key="2"/>
<evidence type="ECO:0000305" key="3"/>
<proteinExistence type="inferred from homology"/>
<dbReference type="EMBL" id="DS027690">
    <property type="protein sequence ID" value="EAW21502.1"/>
    <property type="status" value="ALT_SEQ"/>
    <property type="molecule type" value="Genomic_DNA"/>
</dbReference>
<dbReference type="RefSeq" id="XP_001263399.1">
    <property type="nucleotide sequence ID" value="XM_001263398.1"/>
</dbReference>
<dbReference type="STRING" id="331117.A1D708"/>
<dbReference type="GlyCosmos" id="A1D708">
    <property type="glycosylation" value="1 site, No reported glycans"/>
</dbReference>
<dbReference type="GeneID" id="4589635"/>
<dbReference type="KEGG" id="nfi:NFIA_066690"/>
<dbReference type="VEuPathDB" id="FungiDB:NFIA_066690"/>
<dbReference type="OrthoDB" id="5591789at2759"/>
<dbReference type="Proteomes" id="UP000006702">
    <property type="component" value="Unassembled WGS sequence"/>
</dbReference>
<dbReference type="GO" id="GO:0000139">
    <property type="term" value="C:Golgi membrane"/>
    <property type="evidence" value="ECO:0007669"/>
    <property type="project" value="UniProtKB-SubCell"/>
</dbReference>
<dbReference type="GO" id="GO:0016192">
    <property type="term" value="P:vesicle-mediated transport"/>
    <property type="evidence" value="ECO:0007669"/>
    <property type="project" value="TreeGrafter"/>
</dbReference>
<dbReference type="InterPro" id="IPR019365">
    <property type="entry name" value="TVP18/Ca-channel_flower"/>
</dbReference>
<dbReference type="PANTHER" id="PTHR13314">
    <property type="entry name" value="CALCIUM CHANNEL FLOWER HOMOLOG"/>
    <property type="match status" value="1"/>
</dbReference>
<dbReference type="PANTHER" id="PTHR13314:SF2">
    <property type="entry name" value="CALCIUM CHANNEL FLOWER HOMOLOG"/>
    <property type="match status" value="1"/>
</dbReference>
<dbReference type="Pfam" id="PF10233">
    <property type="entry name" value="Cg6151-P"/>
    <property type="match status" value="1"/>
</dbReference>
<dbReference type="SMART" id="SM01077">
    <property type="entry name" value="Cg6151-P"/>
    <property type="match status" value="1"/>
</dbReference>